<gene>
    <name evidence="1" type="primary">pnp</name>
    <name type="ordered locus">SDY_3343</name>
</gene>
<protein>
    <recommendedName>
        <fullName evidence="1">Polyribonucleotide nucleotidyltransferase</fullName>
        <ecNumber evidence="1">2.7.7.8</ecNumber>
    </recommendedName>
    <alternativeName>
        <fullName evidence="1">Polynucleotide phosphorylase</fullName>
        <shortName evidence="1">PNPase</shortName>
    </alternativeName>
</protein>
<name>PNP_SHIDS</name>
<sequence>MLNPIVRKFQYGQHTVTLETGMMARQATAAVMVSMDDTAVFVTVVGQKKAKPGQDFFPLTVNYQERTYAAGRIPGSFFRREGRPSEGETLIARLIDRPIRPLFPEGFVNEVQVIATVVSVNPQVNPDIVAMIGASAALSLSGIPFNGPIGAARVGYINDQYVLNPTQDELKESKLDLVVAGTEAAVLMVESEAELLSEDQMLGAVVFGHEQQQVVIQNINELVKEAGKPRWDWQPEPVNEALNARVAALAEARLSDAYRITDKQERYAQVDVIKSETIATLLAEDETLDENELGEILHAIEKNVVRSRVLAGEPRIDGREKDMIRGLDVRTGVLPRTHGSALFTRGETQALVTATLGTARDAQVLDELMGERTDTFLFHYNFPPYSVGETGIVGSPKRREIGHGRLAKRGVLAVMPDMDKFPYTVRVVSEITESNGSSSMASVCGASLALMDAGVPIKAAVAGIAMGLVKEGDNYVVLSDILGDEDHLGDMDFKVAGSRDGISALQMDIKIEGITKEIMQVALNQAKGARLHILGVMEQAINAPRGDISEFAPRIHTIKINPDKIKDVIGKGGSVIRALTEETGTTIEIEDDGTVKIAATDGEKAKHAIRRIEEITAEIEVGRVYTGKVTRIVDFGAFVAIGGGKEGLVHISQIADKRVEKVTDYLLMGQEVPVKVLEVDRQGRIRLSIKEATEQSQPAAAPEAPAAEQGE</sequence>
<dbReference type="EC" id="2.7.7.8" evidence="1"/>
<dbReference type="EMBL" id="CP000034">
    <property type="protein sequence ID" value="ABB63336.1"/>
    <property type="status" value="ALT_INIT"/>
    <property type="molecule type" value="Genomic_DNA"/>
</dbReference>
<dbReference type="RefSeq" id="WP_005018804.1">
    <property type="nucleotide sequence ID" value="NC_007606.1"/>
</dbReference>
<dbReference type="RefSeq" id="YP_404827.1">
    <property type="nucleotide sequence ID" value="NC_007606.1"/>
</dbReference>
<dbReference type="SMR" id="Q32BG9"/>
<dbReference type="STRING" id="300267.SDY_3343"/>
<dbReference type="EnsemblBacteria" id="ABB63336">
    <property type="protein sequence ID" value="ABB63336"/>
    <property type="gene ID" value="SDY_3343"/>
</dbReference>
<dbReference type="KEGG" id="sdy:SDY_3343"/>
<dbReference type="PATRIC" id="fig|300267.13.peg.3997"/>
<dbReference type="HOGENOM" id="CLU_004217_2_2_6"/>
<dbReference type="Proteomes" id="UP000002716">
    <property type="component" value="Chromosome"/>
</dbReference>
<dbReference type="GO" id="GO:0005829">
    <property type="term" value="C:cytosol"/>
    <property type="evidence" value="ECO:0007669"/>
    <property type="project" value="TreeGrafter"/>
</dbReference>
<dbReference type="GO" id="GO:0000175">
    <property type="term" value="F:3'-5'-RNA exonuclease activity"/>
    <property type="evidence" value="ECO:0007669"/>
    <property type="project" value="TreeGrafter"/>
</dbReference>
<dbReference type="GO" id="GO:0000287">
    <property type="term" value="F:magnesium ion binding"/>
    <property type="evidence" value="ECO:0007669"/>
    <property type="project" value="UniProtKB-UniRule"/>
</dbReference>
<dbReference type="GO" id="GO:0004654">
    <property type="term" value="F:polyribonucleotide nucleotidyltransferase activity"/>
    <property type="evidence" value="ECO:0007669"/>
    <property type="project" value="UniProtKB-UniRule"/>
</dbReference>
<dbReference type="GO" id="GO:0003723">
    <property type="term" value="F:RNA binding"/>
    <property type="evidence" value="ECO:0007669"/>
    <property type="project" value="UniProtKB-UniRule"/>
</dbReference>
<dbReference type="GO" id="GO:0006402">
    <property type="term" value="P:mRNA catabolic process"/>
    <property type="evidence" value="ECO:0007669"/>
    <property type="project" value="UniProtKB-UniRule"/>
</dbReference>
<dbReference type="GO" id="GO:0006396">
    <property type="term" value="P:RNA processing"/>
    <property type="evidence" value="ECO:0007669"/>
    <property type="project" value="InterPro"/>
</dbReference>
<dbReference type="CDD" id="cd02393">
    <property type="entry name" value="KH-I_PNPase"/>
    <property type="match status" value="1"/>
</dbReference>
<dbReference type="CDD" id="cd11363">
    <property type="entry name" value="RNase_PH_PNPase_1"/>
    <property type="match status" value="1"/>
</dbReference>
<dbReference type="CDD" id="cd11364">
    <property type="entry name" value="RNase_PH_PNPase_2"/>
    <property type="match status" value="1"/>
</dbReference>
<dbReference type="CDD" id="cd04472">
    <property type="entry name" value="S1_PNPase"/>
    <property type="match status" value="1"/>
</dbReference>
<dbReference type="FunFam" id="2.40.50.140:FF:000023">
    <property type="entry name" value="Polyribonucleotide nucleotidyltransferase"/>
    <property type="match status" value="1"/>
</dbReference>
<dbReference type="FunFam" id="3.30.1370.10:FF:000001">
    <property type="entry name" value="Polyribonucleotide nucleotidyltransferase"/>
    <property type="match status" value="1"/>
</dbReference>
<dbReference type="FunFam" id="3.30.230.70:FF:000001">
    <property type="entry name" value="Polyribonucleotide nucleotidyltransferase"/>
    <property type="match status" value="1"/>
</dbReference>
<dbReference type="FunFam" id="3.30.230.70:FF:000002">
    <property type="entry name" value="Polyribonucleotide nucleotidyltransferase"/>
    <property type="match status" value="1"/>
</dbReference>
<dbReference type="Gene3D" id="3.30.230.70">
    <property type="entry name" value="GHMP Kinase, N-terminal domain"/>
    <property type="match status" value="2"/>
</dbReference>
<dbReference type="Gene3D" id="3.30.1370.10">
    <property type="entry name" value="K Homology domain, type 1"/>
    <property type="match status" value="1"/>
</dbReference>
<dbReference type="Gene3D" id="2.40.50.140">
    <property type="entry name" value="Nucleic acid-binding proteins"/>
    <property type="match status" value="1"/>
</dbReference>
<dbReference type="HAMAP" id="MF_01595">
    <property type="entry name" value="PNPase"/>
    <property type="match status" value="1"/>
</dbReference>
<dbReference type="InterPro" id="IPR001247">
    <property type="entry name" value="ExoRNase_PH_dom1"/>
</dbReference>
<dbReference type="InterPro" id="IPR015847">
    <property type="entry name" value="ExoRNase_PH_dom2"/>
</dbReference>
<dbReference type="InterPro" id="IPR036345">
    <property type="entry name" value="ExoRNase_PH_dom2_sf"/>
</dbReference>
<dbReference type="InterPro" id="IPR004087">
    <property type="entry name" value="KH_dom"/>
</dbReference>
<dbReference type="InterPro" id="IPR004088">
    <property type="entry name" value="KH_dom_type_1"/>
</dbReference>
<dbReference type="InterPro" id="IPR036612">
    <property type="entry name" value="KH_dom_type_1_sf"/>
</dbReference>
<dbReference type="InterPro" id="IPR012340">
    <property type="entry name" value="NA-bd_OB-fold"/>
</dbReference>
<dbReference type="InterPro" id="IPR012162">
    <property type="entry name" value="PNPase"/>
</dbReference>
<dbReference type="InterPro" id="IPR027408">
    <property type="entry name" value="PNPase/RNase_PH_dom_sf"/>
</dbReference>
<dbReference type="InterPro" id="IPR015848">
    <property type="entry name" value="PNPase_PH_RNA-bd_bac/org-type"/>
</dbReference>
<dbReference type="InterPro" id="IPR036456">
    <property type="entry name" value="PNPase_PH_RNA-bd_sf"/>
</dbReference>
<dbReference type="InterPro" id="IPR020568">
    <property type="entry name" value="Ribosomal_Su5_D2-typ_SF"/>
</dbReference>
<dbReference type="InterPro" id="IPR003029">
    <property type="entry name" value="S1_domain"/>
</dbReference>
<dbReference type="NCBIfam" id="TIGR03591">
    <property type="entry name" value="polynuc_phos"/>
    <property type="match status" value="1"/>
</dbReference>
<dbReference type="NCBIfam" id="NF008805">
    <property type="entry name" value="PRK11824.1"/>
    <property type="match status" value="1"/>
</dbReference>
<dbReference type="PANTHER" id="PTHR11252">
    <property type="entry name" value="POLYRIBONUCLEOTIDE NUCLEOTIDYLTRANSFERASE"/>
    <property type="match status" value="1"/>
</dbReference>
<dbReference type="PANTHER" id="PTHR11252:SF0">
    <property type="entry name" value="POLYRIBONUCLEOTIDE NUCLEOTIDYLTRANSFERASE 1, MITOCHONDRIAL"/>
    <property type="match status" value="1"/>
</dbReference>
<dbReference type="Pfam" id="PF00013">
    <property type="entry name" value="KH_1"/>
    <property type="match status" value="1"/>
</dbReference>
<dbReference type="Pfam" id="PF03726">
    <property type="entry name" value="PNPase"/>
    <property type="match status" value="1"/>
</dbReference>
<dbReference type="Pfam" id="PF01138">
    <property type="entry name" value="RNase_PH"/>
    <property type="match status" value="2"/>
</dbReference>
<dbReference type="Pfam" id="PF03725">
    <property type="entry name" value="RNase_PH_C"/>
    <property type="match status" value="2"/>
</dbReference>
<dbReference type="Pfam" id="PF00575">
    <property type="entry name" value="S1"/>
    <property type="match status" value="1"/>
</dbReference>
<dbReference type="PIRSF" id="PIRSF005499">
    <property type="entry name" value="PNPase"/>
    <property type="match status" value="1"/>
</dbReference>
<dbReference type="SMART" id="SM00322">
    <property type="entry name" value="KH"/>
    <property type="match status" value="1"/>
</dbReference>
<dbReference type="SMART" id="SM00316">
    <property type="entry name" value="S1"/>
    <property type="match status" value="1"/>
</dbReference>
<dbReference type="SUPFAM" id="SSF54791">
    <property type="entry name" value="Eukaryotic type KH-domain (KH-domain type I)"/>
    <property type="match status" value="1"/>
</dbReference>
<dbReference type="SUPFAM" id="SSF50249">
    <property type="entry name" value="Nucleic acid-binding proteins"/>
    <property type="match status" value="1"/>
</dbReference>
<dbReference type="SUPFAM" id="SSF46915">
    <property type="entry name" value="Polynucleotide phosphorylase/guanosine pentaphosphate synthase (PNPase/GPSI), domain 3"/>
    <property type="match status" value="1"/>
</dbReference>
<dbReference type="SUPFAM" id="SSF55666">
    <property type="entry name" value="Ribonuclease PH domain 2-like"/>
    <property type="match status" value="2"/>
</dbReference>
<dbReference type="SUPFAM" id="SSF54211">
    <property type="entry name" value="Ribosomal protein S5 domain 2-like"/>
    <property type="match status" value="2"/>
</dbReference>
<dbReference type="PROSITE" id="PS50084">
    <property type="entry name" value="KH_TYPE_1"/>
    <property type="match status" value="1"/>
</dbReference>
<dbReference type="PROSITE" id="PS50126">
    <property type="entry name" value="S1"/>
    <property type="match status" value="1"/>
</dbReference>
<organism>
    <name type="scientific">Shigella dysenteriae serotype 1 (strain Sd197)</name>
    <dbReference type="NCBI Taxonomy" id="300267"/>
    <lineage>
        <taxon>Bacteria</taxon>
        <taxon>Pseudomonadati</taxon>
        <taxon>Pseudomonadota</taxon>
        <taxon>Gammaproteobacteria</taxon>
        <taxon>Enterobacterales</taxon>
        <taxon>Enterobacteriaceae</taxon>
        <taxon>Shigella</taxon>
    </lineage>
</organism>
<feature type="chain" id="PRO_0000329849" description="Polyribonucleotide nucleotidyltransferase">
    <location>
        <begin position="1"/>
        <end position="711"/>
    </location>
</feature>
<feature type="domain" description="KH" evidence="1">
    <location>
        <begin position="553"/>
        <end position="612"/>
    </location>
</feature>
<feature type="domain" description="S1 motif" evidence="1">
    <location>
        <begin position="622"/>
        <end position="690"/>
    </location>
</feature>
<feature type="region of interest" description="Disordered" evidence="2">
    <location>
        <begin position="690"/>
        <end position="711"/>
    </location>
</feature>
<feature type="compositionally biased region" description="Low complexity" evidence="2">
    <location>
        <begin position="694"/>
        <end position="711"/>
    </location>
</feature>
<feature type="binding site" evidence="1">
    <location>
        <position position="486"/>
    </location>
    <ligand>
        <name>Mg(2+)</name>
        <dbReference type="ChEBI" id="CHEBI:18420"/>
    </ligand>
</feature>
<feature type="binding site" evidence="1">
    <location>
        <position position="492"/>
    </location>
    <ligand>
        <name>Mg(2+)</name>
        <dbReference type="ChEBI" id="CHEBI:18420"/>
    </ligand>
</feature>
<proteinExistence type="inferred from homology"/>
<comment type="function">
    <text evidence="1">Involved in mRNA degradation. Catalyzes the phosphorolysis of single-stranded polyribonucleotides processively in the 3'- to 5'-direction.</text>
</comment>
<comment type="catalytic activity">
    <reaction evidence="1">
        <text>RNA(n+1) + phosphate = RNA(n) + a ribonucleoside 5'-diphosphate</text>
        <dbReference type="Rhea" id="RHEA:22096"/>
        <dbReference type="Rhea" id="RHEA-COMP:14527"/>
        <dbReference type="Rhea" id="RHEA-COMP:17342"/>
        <dbReference type="ChEBI" id="CHEBI:43474"/>
        <dbReference type="ChEBI" id="CHEBI:57930"/>
        <dbReference type="ChEBI" id="CHEBI:140395"/>
        <dbReference type="EC" id="2.7.7.8"/>
    </reaction>
</comment>
<comment type="cofactor">
    <cofactor evidence="1">
        <name>Mg(2+)</name>
        <dbReference type="ChEBI" id="CHEBI:18420"/>
    </cofactor>
</comment>
<comment type="subunit">
    <text evidence="1">Component of the RNA degradosome, which is a multiprotein complex involved in RNA processing and mRNA degradation.</text>
</comment>
<comment type="subcellular location">
    <subcellularLocation>
        <location evidence="1">Cytoplasm</location>
    </subcellularLocation>
</comment>
<comment type="similarity">
    <text evidence="1">Belongs to the polyribonucleotide nucleotidyltransferase family.</text>
</comment>
<comment type="sequence caution" evidence="3">
    <conflict type="erroneous initiation">
        <sequence resource="EMBL-CDS" id="ABB63336"/>
    </conflict>
</comment>
<keyword id="KW-0963">Cytoplasm</keyword>
<keyword id="KW-0460">Magnesium</keyword>
<keyword id="KW-0479">Metal-binding</keyword>
<keyword id="KW-0548">Nucleotidyltransferase</keyword>
<keyword id="KW-1185">Reference proteome</keyword>
<keyword id="KW-0694">RNA-binding</keyword>
<keyword id="KW-0808">Transferase</keyword>
<accession>Q32BG9</accession>
<evidence type="ECO:0000255" key="1">
    <source>
        <dbReference type="HAMAP-Rule" id="MF_01595"/>
    </source>
</evidence>
<evidence type="ECO:0000256" key="2">
    <source>
        <dbReference type="SAM" id="MobiDB-lite"/>
    </source>
</evidence>
<evidence type="ECO:0000305" key="3"/>
<reference key="1">
    <citation type="journal article" date="2005" name="Nucleic Acids Res.">
        <title>Genome dynamics and diversity of Shigella species, the etiologic agents of bacillary dysentery.</title>
        <authorList>
            <person name="Yang F."/>
            <person name="Yang J."/>
            <person name="Zhang X."/>
            <person name="Chen L."/>
            <person name="Jiang Y."/>
            <person name="Yan Y."/>
            <person name="Tang X."/>
            <person name="Wang J."/>
            <person name="Xiong Z."/>
            <person name="Dong J."/>
            <person name="Xue Y."/>
            <person name="Zhu Y."/>
            <person name="Xu X."/>
            <person name="Sun L."/>
            <person name="Chen S."/>
            <person name="Nie H."/>
            <person name="Peng J."/>
            <person name="Xu J."/>
            <person name="Wang Y."/>
            <person name="Yuan Z."/>
            <person name="Wen Y."/>
            <person name="Yao Z."/>
            <person name="Shen Y."/>
            <person name="Qiang B."/>
            <person name="Hou Y."/>
            <person name="Yu J."/>
            <person name="Jin Q."/>
        </authorList>
    </citation>
    <scope>NUCLEOTIDE SEQUENCE [LARGE SCALE GENOMIC DNA]</scope>
    <source>
        <strain>Sd197</strain>
    </source>
</reference>